<keyword id="KW-0119">Carbohydrate metabolism</keyword>
<keyword id="KW-0313">Glucose metabolism</keyword>
<keyword id="KW-0378">Hydrolase</keyword>
<reference key="1">
    <citation type="submission" date="2009-07" db="EMBL/GenBank/DDBJ databases">
        <title>Complete sequence of Pectobacterium carotovorum subsp. carotovorum PC1.</title>
        <authorList>
            <consortium name="US DOE Joint Genome Institute"/>
            <person name="Lucas S."/>
            <person name="Copeland A."/>
            <person name="Lapidus A."/>
            <person name="Glavina del Rio T."/>
            <person name="Tice H."/>
            <person name="Bruce D."/>
            <person name="Goodwin L."/>
            <person name="Pitluck S."/>
            <person name="Munk A.C."/>
            <person name="Brettin T."/>
            <person name="Detter J.C."/>
            <person name="Han C."/>
            <person name="Tapia R."/>
            <person name="Larimer F."/>
            <person name="Land M."/>
            <person name="Hauser L."/>
            <person name="Kyrpides N."/>
            <person name="Mikhailova N."/>
            <person name="Balakrishnan V."/>
            <person name="Glasner J."/>
            <person name="Perna N.T."/>
        </authorList>
    </citation>
    <scope>NUCLEOTIDE SEQUENCE [LARGE SCALE GENOMIC DNA]</scope>
    <source>
        <strain>PC1</strain>
    </source>
</reference>
<protein>
    <recommendedName>
        <fullName evidence="1">6-phosphogluconolactonase</fullName>
        <shortName evidence="1">6-P-gluconolactonase</shortName>
        <ecNumber evidence="1">3.1.1.31</ecNumber>
    </recommendedName>
</protein>
<dbReference type="EC" id="3.1.1.31" evidence="1"/>
<dbReference type="EMBL" id="CP001657">
    <property type="protein sequence ID" value="ACT12327.1"/>
    <property type="molecule type" value="Genomic_DNA"/>
</dbReference>
<dbReference type="RefSeq" id="WP_015839555.1">
    <property type="nucleotide sequence ID" value="NC_012917.1"/>
</dbReference>
<dbReference type="SMR" id="C6DCH7"/>
<dbReference type="STRING" id="561230.PC1_1280"/>
<dbReference type="KEGG" id="pct:PC1_1280"/>
<dbReference type="eggNOG" id="COG2706">
    <property type="taxonomic scope" value="Bacteria"/>
</dbReference>
<dbReference type="HOGENOM" id="CLU_038716_2_0_6"/>
<dbReference type="OrthoDB" id="9790815at2"/>
<dbReference type="UniPathway" id="UPA00115">
    <property type="reaction ID" value="UER00409"/>
</dbReference>
<dbReference type="Proteomes" id="UP000002736">
    <property type="component" value="Chromosome"/>
</dbReference>
<dbReference type="GO" id="GO:0005829">
    <property type="term" value="C:cytosol"/>
    <property type="evidence" value="ECO:0007669"/>
    <property type="project" value="TreeGrafter"/>
</dbReference>
<dbReference type="GO" id="GO:0017057">
    <property type="term" value="F:6-phosphogluconolactonase activity"/>
    <property type="evidence" value="ECO:0007669"/>
    <property type="project" value="UniProtKB-UniRule"/>
</dbReference>
<dbReference type="GO" id="GO:0006006">
    <property type="term" value="P:glucose metabolic process"/>
    <property type="evidence" value="ECO:0007669"/>
    <property type="project" value="UniProtKB-KW"/>
</dbReference>
<dbReference type="GO" id="GO:0009051">
    <property type="term" value="P:pentose-phosphate shunt, oxidative branch"/>
    <property type="evidence" value="ECO:0007669"/>
    <property type="project" value="UniProtKB-UniRule"/>
</dbReference>
<dbReference type="Gene3D" id="2.130.10.10">
    <property type="entry name" value="YVTN repeat-like/Quinoprotein amine dehydrogenase"/>
    <property type="match status" value="1"/>
</dbReference>
<dbReference type="HAMAP" id="MF_01605">
    <property type="entry name" value="6P_gluconolactonase"/>
    <property type="match status" value="1"/>
</dbReference>
<dbReference type="InterPro" id="IPR022528">
    <property type="entry name" value="6-phosphogluconolactonase_YbhE"/>
</dbReference>
<dbReference type="InterPro" id="IPR050282">
    <property type="entry name" value="Cycloisomerase_2"/>
</dbReference>
<dbReference type="InterPro" id="IPR019405">
    <property type="entry name" value="Lactonase_7-beta_prop"/>
</dbReference>
<dbReference type="InterPro" id="IPR011045">
    <property type="entry name" value="N2O_reductase_N"/>
</dbReference>
<dbReference type="InterPro" id="IPR015943">
    <property type="entry name" value="WD40/YVTN_repeat-like_dom_sf"/>
</dbReference>
<dbReference type="NCBIfam" id="NF008258">
    <property type="entry name" value="PRK11028.1"/>
    <property type="match status" value="1"/>
</dbReference>
<dbReference type="PANTHER" id="PTHR30344:SF1">
    <property type="entry name" value="6-PHOSPHOGLUCONOLACTONASE"/>
    <property type="match status" value="1"/>
</dbReference>
<dbReference type="PANTHER" id="PTHR30344">
    <property type="entry name" value="6-PHOSPHOGLUCONOLACTONASE-RELATED"/>
    <property type="match status" value="1"/>
</dbReference>
<dbReference type="Pfam" id="PF10282">
    <property type="entry name" value="Lactonase"/>
    <property type="match status" value="1"/>
</dbReference>
<dbReference type="SUPFAM" id="SSF50974">
    <property type="entry name" value="Nitrous oxide reductase, N-terminal domain"/>
    <property type="match status" value="1"/>
</dbReference>
<proteinExistence type="inferred from homology"/>
<evidence type="ECO:0000255" key="1">
    <source>
        <dbReference type="HAMAP-Rule" id="MF_01605"/>
    </source>
</evidence>
<accession>C6DCH7</accession>
<name>6PGL_PECCP</name>
<gene>
    <name evidence="1" type="primary">pgl</name>
    <name type="ordered locus">PC1_1280</name>
</gene>
<organism>
    <name type="scientific">Pectobacterium carotovorum subsp. carotovorum (strain PC1)</name>
    <dbReference type="NCBI Taxonomy" id="561230"/>
    <lineage>
        <taxon>Bacteria</taxon>
        <taxon>Pseudomonadati</taxon>
        <taxon>Pseudomonadota</taxon>
        <taxon>Gammaproteobacteria</taxon>
        <taxon>Enterobacterales</taxon>
        <taxon>Pectobacteriaceae</taxon>
        <taxon>Pectobacterium</taxon>
    </lineage>
</organism>
<sequence length="332" mass="36139">MQQVVYVASPESQQIHVWQLGAQGNLTLLQTVDVPGQVQPMVIAPNKRHLYVGVRPDFRVLSYRIDEQGKLTEAGVASLPGSPTHLSTDNDGRFLFSASYSGACVSVSPIGADGIVGEPIQQLDGLEGCHSTNIDPTNRVVWAPCLKEDRIRLYDLGATGELSVHRQAEMTTVAGAGPRHMAFHPNQRFAYCVNELDSSVDVYQLDAASGELEKVQTLDAMPAGFNDTRWAADIHITPNGRFLYISDRTASLLSIFQVSEDGSALTLTGHQPTETQPRGFNIDNTGEFLISAGQKSQHIEVYHIDQNTGDLQPLARYAVGQGPMWVSVLALD</sequence>
<comment type="function">
    <text evidence="1">Catalyzes the hydrolysis of 6-phosphogluconolactone to 6-phosphogluconate.</text>
</comment>
<comment type="catalytic activity">
    <reaction evidence="1">
        <text>6-phospho-D-glucono-1,5-lactone + H2O = 6-phospho-D-gluconate + H(+)</text>
        <dbReference type="Rhea" id="RHEA:12556"/>
        <dbReference type="ChEBI" id="CHEBI:15377"/>
        <dbReference type="ChEBI" id="CHEBI:15378"/>
        <dbReference type="ChEBI" id="CHEBI:57955"/>
        <dbReference type="ChEBI" id="CHEBI:58759"/>
        <dbReference type="EC" id="3.1.1.31"/>
    </reaction>
</comment>
<comment type="pathway">
    <text evidence="1">Carbohydrate degradation; pentose phosphate pathway; D-ribulose 5-phosphate from D-glucose 6-phosphate (oxidative stage): step 2/3.</text>
</comment>
<comment type="similarity">
    <text evidence="1">Belongs to the cycloisomerase 2 family.</text>
</comment>
<feature type="chain" id="PRO_1000215698" description="6-phosphogluconolactonase">
    <location>
        <begin position="1"/>
        <end position="332"/>
    </location>
</feature>